<reference key="1">
    <citation type="journal article" date="1994" name="J. Biochem.">
        <title>Isolation and pharmacological characterization of four novel Na+ channel-blocking toxins from the scorpion Centruroides noxius Hoffmann.</title>
        <authorList>
            <person name="Valdivia H.H."/>
            <person name="Martin B.M."/>
            <person name="Ramirez A.N."/>
            <person name="Fletcher P.L. Jr."/>
            <person name="Possani L.D."/>
        </authorList>
    </citation>
    <scope>PROTEIN SEQUENCE</scope>
    <scope>FUNCTION</scope>
    <source>
        <tissue>Venom</tissue>
    </source>
</reference>
<keyword id="KW-0903">Direct protein sequencing</keyword>
<keyword id="KW-1015">Disulfide bond</keyword>
<keyword id="KW-0872">Ion channel impairing toxin</keyword>
<keyword id="KW-0528">Neurotoxin</keyword>
<keyword id="KW-0964">Secreted</keyword>
<keyword id="KW-0800">Toxin</keyword>
<keyword id="KW-0738">Voltage-gated sodium channel impairing toxin</keyword>
<sequence length="55" mass="6373">KEGYIVNYHDGCKYECYKLGDNDYCLRECKLRVGKGAGGYCYAFACWCTHLYEQA</sequence>
<protein>
    <recommendedName>
        <fullName>Beta-toxin Cn7</fullName>
        <shortName>Toxin-7</shortName>
    </recommendedName>
    <alternativeName>
        <fullName>Toxin II-13.3</fullName>
    </alternativeName>
</protein>
<dbReference type="SMR" id="Q9TWL1"/>
<dbReference type="GO" id="GO:0005576">
    <property type="term" value="C:extracellular region"/>
    <property type="evidence" value="ECO:0007669"/>
    <property type="project" value="UniProtKB-SubCell"/>
</dbReference>
<dbReference type="GO" id="GO:0019871">
    <property type="term" value="F:sodium channel inhibitor activity"/>
    <property type="evidence" value="ECO:0007669"/>
    <property type="project" value="InterPro"/>
</dbReference>
<dbReference type="GO" id="GO:0090729">
    <property type="term" value="F:toxin activity"/>
    <property type="evidence" value="ECO:0007669"/>
    <property type="project" value="UniProtKB-KW"/>
</dbReference>
<dbReference type="GO" id="GO:0006952">
    <property type="term" value="P:defense response"/>
    <property type="evidence" value="ECO:0007669"/>
    <property type="project" value="InterPro"/>
</dbReference>
<dbReference type="CDD" id="cd23106">
    <property type="entry name" value="neurotoxins_LC_scorpion"/>
    <property type="match status" value="1"/>
</dbReference>
<dbReference type="Gene3D" id="3.30.30.10">
    <property type="entry name" value="Knottin, scorpion toxin-like"/>
    <property type="match status" value="1"/>
</dbReference>
<dbReference type="InterPro" id="IPR044062">
    <property type="entry name" value="LCN-type_CS_alpha_beta_dom"/>
</dbReference>
<dbReference type="InterPro" id="IPR003614">
    <property type="entry name" value="Scorpion_toxin-like"/>
</dbReference>
<dbReference type="InterPro" id="IPR036574">
    <property type="entry name" value="Scorpion_toxin-like_sf"/>
</dbReference>
<dbReference type="InterPro" id="IPR018218">
    <property type="entry name" value="Scorpion_toxinL"/>
</dbReference>
<dbReference type="InterPro" id="IPR002061">
    <property type="entry name" value="Scorpion_toxinL/defensin"/>
</dbReference>
<dbReference type="Pfam" id="PF00537">
    <property type="entry name" value="Toxin_3"/>
    <property type="match status" value="1"/>
</dbReference>
<dbReference type="PRINTS" id="PR00285">
    <property type="entry name" value="SCORPNTOXIN"/>
</dbReference>
<dbReference type="SMART" id="SM00505">
    <property type="entry name" value="Knot1"/>
    <property type="match status" value="1"/>
</dbReference>
<dbReference type="SUPFAM" id="SSF57095">
    <property type="entry name" value="Scorpion toxin-like"/>
    <property type="match status" value="1"/>
</dbReference>
<dbReference type="PROSITE" id="PS51863">
    <property type="entry name" value="LCN_CSAB"/>
    <property type="match status" value="1"/>
</dbReference>
<feature type="chain" id="PRO_0000066768" description="Beta-toxin Cn7">
    <location>
        <begin position="1"/>
        <end position="55" status="greater than"/>
    </location>
</feature>
<feature type="domain" description="LCN-type CS-alpha/beta" evidence="1">
    <location>
        <begin position="1"/>
        <end position="55" status="greater than"/>
    </location>
</feature>
<feature type="disulfide bond" evidence="1">
    <location>
        <begin position="16"/>
        <end position="41"/>
    </location>
</feature>
<feature type="disulfide bond" evidence="1">
    <location>
        <begin position="25"/>
        <end position="46"/>
    </location>
</feature>
<feature type="disulfide bond" evidence="1">
    <location>
        <begin position="29"/>
        <end position="48"/>
    </location>
</feature>
<feature type="non-terminal residue">
    <location>
        <position position="55"/>
    </location>
</feature>
<comment type="function">
    <text evidence="2">Beta toxins bind voltage-independently at site-4 of sodium channels (Nav) and shift the voltage of activation toward more negative potentials thereby affecting sodium channel activation and promoting spontaneous and repetitive firing.</text>
</comment>
<comment type="subcellular location">
    <subcellularLocation>
        <location>Secreted</location>
    </subcellularLocation>
</comment>
<comment type="tissue specificity">
    <text>Expressed by the venom gland.</text>
</comment>
<comment type="domain">
    <text evidence="3">Has the structural arrangement of an alpha-helix connected to antiparallel beta-sheets by disulfide bonds (CS-alpha/beta).</text>
</comment>
<comment type="similarity">
    <text evidence="3">Belongs to the long (3 C-C) scorpion toxin superfamily. Sodium channel inhibitor family. Beta subfamily.</text>
</comment>
<proteinExistence type="evidence at protein level"/>
<evidence type="ECO:0000255" key="1">
    <source>
        <dbReference type="PROSITE-ProRule" id="PRU01210"/>
    </source>
</evidence>
<evidence type="ECO:0000269" key="2">
    <source>
    </source>
</evidence>
<evidence type="ECO:0000305" key="3"/>
<name>SCX7_CENNO</name>
<accession>Q9TWL1</accession>
<organism>
    <name type="scientific">Centruroides noxius</name>
    <name type="common">Mexican scorpion</name>
    <dbReference type="NCBI Taxonomy" id="6878"/>
    <lineage>
        <taxon>Eukaryota</taxon>
        <taxon>Metazoa</taxon>
        <taxon>Ecdysozoa</taxon>
        <taxon>Arthropoda</taxon>
        <taxon>Chelicerata</taxon>
        <taxon>Arachnida</taxon>
        <taxon>Scorpiones</taxon>
        <taxon>Buthida</taxon>
        <taxon>Buthoidea</taxon>
        <taxon>Buthidae</taxon>
        <taxon>Centruroides</taxon>
    </lineage>
</organism>